<accession>A3PVD8</accession>
<reference key="1">
    <citation type="submission" date="2007-02" db="EMBL/GenBank/DDBJ databases">
        <title>Complete sequence of Mycobacterium sp. JLS.</title>
        <authorList>
            <consortium name="US DOE Joint Genome Institute"/>
            <person name="Copeland A."/>
            <person name="Lucas S."/>
            <person name="Lapidus A."/>
            <person name="Barry K."/>
            <person name="Detter J.C."/>
            <person name="Glavina del Rio T."/>
            <person name="Hammon N."/>
            <person name="Israni S."/>
            <person name="Dalin E."/>
            <person name="Tice H."/>
            <person name="Pitluck S."/>
            <person name="Chain P."/>
            <person name="Malfatti S."/>
            <person name="Shin M."/>
            <person name="Vergez L."/>
            <person name="Schmutz J."/>
            <person name="Larimer F."/>
            <person name="Land M."/>
            <person name="Hauser L."/>
            <person name="Kyrpides N."/>
            <person name="Mikhailova N."/>
            <person name="Miller C.D."/>
            <person name="Anderson A.J."/>
            <person name="Sims R.C."/>
            <person name="Richardson P."/>
        </authorList>
    </citation>
    <scope>NUCLEOTIDE SEQUENCE [LARGE SCALE GENOMIC DNA]</scope>
    <source>
        <strain>JLS</strain>
    </source>
</reference>
<gene>
    <name evidence="1" type="primary">rpsZ</name>
    <name evidence="1" type="synonym">rpsN</name>
    <name type="ordered locus">Mjls_1057</name>
</gene>
<protein>
    <recommendedName>
        <fullName evidence="1">Small ribosomal subunit protein uS14</fullName>
    </recommendedName>
    <alternativeName>
        <fullName evidence="2">30S ribosomal protein S14 type Z</fullName>
    </alternativeName>
</protein>
<sequence length="61" mass="6988">MAKKALVNKANKKPKFKVRGYTRCQRCGRPHAVFRKFGLCRICLREMAHAGELPGVQKSSW</sequence>
<comment type="function">
    <text evidence="1">Binds 16S rRNA, required for the assembly of 30S particles and may also be responsible for determining the conformation of the 16S rRNA at the A site.</text>
</comment>
<comment type="cofactor">
    <cofactor evidence="1">
        <name>Zn(2+)</name>
        <dbReference type="ChEBI" id="CHEBI:29105"/>
    </cofactor>
    <text evidence="1">Binds 1 zinc ion per subunit.</text>
</comment>
<comment type="subunit">
    <text evidence="1">Part of the 30S ribosomal subunit. Contacts proteins S3 and S10.</text>
</comment>
<comment type="similarity">
    <text evidence="1">Belongs to the universal ribosomal protein uS14 family. Zinc-binding uS14 subfamily.</text>
</comment>
<keyword id="KW-0479">Metal-binding</keyword>
<keyword id="KW-0687">Ribonucleoprotein</keyword>
<keyword id="KW-0689">Ribosomal protein</keyword>
<keyword id="KW-0694">RNA-binding</keyword>
<keyword id="KW-0699">rRNA-binding</keyword>
<keyword id="KW-0862">Zinc</keyword>
<feature type="chain" id="PRO_1000067954" description="Small ribosomal subunit protein uS14">
    <location>
        <begin position="1"/>
        <end position="61"/>
    </location>
</feature>
<feature type="binding site" evidence="1">
    <location>
        <position position="24"/>
    </location>
    <ligand>
        <name>Zn(2+)</name>
        <dbReference type="ChEBI" id="CHEBI:29105"/>
    </ligand>
</feature>
<feature type="binding site" evidence="1">
    <location>
        <position position="27"/>
    </location>
    <ligand>
        <name>Zn(2+)</name>
        <dbReference type="ChEBI" id="CHEBI:29105"/>
    </ligand>
</feature>
<feature type="binding site" evidence="1">
    <location>
        <position position="40"/>
    </location>
    <ligand>
        <name>Zn(2+)</name>
        <dbReference type="ChEBI" id="CHEBI:29105"/>
    </ligand>
</feature>
<feature type="binding site" evidence="1">
    <location>
        <position position="43"/>
    </location>
    <ligand>
        <name>Zn(2+)</name>
        <dbReference type="ChEBI" id="CHEBI:29105"/>
    </ligand>
</feature>
<name>RS14Z_MYCSJ</name>
<evidence type="ECO:0000255" key="1">
    <source>
        <dbReference type="HAMAP-Rule" id="MF_01364"/>
    </source>
</evidence>
<evidence type="ECO:0000305" key="2"/>
<proteinExistence type="inferred from homology"/>
<organism>
    <name type="scientific">Mycobacterium sp. (strain JLS)</name>
    <dbReference type="NCBI Taxonomy" id="164757"/>
    <lineage>
        <taxon>Bacteria</taxon>
        <taxon>Bacillati</taxon>
        <taxon>Actinomycetota</taxon>
        <taxon>Actinomycetes</taxon>
        <taxon>Mycobacteriales</taxon>
        <taxon>Mycobacteriaceae</taxon>
        <taxon>Mycobacterium</taxon>
    </lineage>
</organism>
<dbReference type="EMBL" id="CP000580">
    <property type="protein sequence ID" value="ABN96865.1"/>
    <property type="molecule type" value="Genomic_DNA"/>
</dbReference>
<dbReference type="SMR" id="A3PVD8"/>
<dbReference type="KEGG" id="mjl:Mjls_1057"/>
<dbReference type="HOGENOM" id="CLU_139869_3_0_11"/>
<dbReference type="BioCyc" id="MSP164757:G1G8C-1070-MONOMER"/>
<dbReference type="GO" id="GO:0005737">
    <property type="term" value="C:cytoplasm"/>
    <property type="evidence" value="ECO:0007669"/>
    <property type="project" value="UniProtKB-ARBA"/>
</dbReference>
<dbReference type="GO" id="GO:0015935">
    <property type="term" value="C:small ribosomal subunit"/>
    <property type="evidence" value="ECO:0007669"/>
    <property type="project" value="TreeGrafter"/>
</dbReference>
<dbReference type="GO" id="GO:0019843">
    <property type="term" value="F:rRNA binding"/>
    <property type="evidence" value="ECO:0007669"/>
    <property type="project" value="UniProtKB-UniRule"/>
</dbReference>
<dbReference type="GO" id="GO:0003735">
    <property type="term" value="F:structural constituent of ribosome"/>
    <property type="evidence" value="ECO:0007669"/>
    <property type="project" value="InterPro"/>
</dbReference>
<dbReference type="GO" id="GO:0008270">
    <property type="term" value="F:zinc ion binding"/>
    <property type="evidence" value="ECO:0007669"/>
    <property type="project" value="UniProtKB-UniRule"/>
</dbReference>
<dbReference type="GO" id="GO:0006412">
    <property type="term" value="P:translation"/>
    <property type="evidence" value="ECO:0007669"/>
    <property type="project" value="UniProtKB-UniRule"/>
</dbReference>
<dbReference type="FunFam" id="4.10.830.10:FF:000001">
    <property type="entry name" value="30S ribosomal protein S14 type Z"/>
    <property type="match status" value="1"/>
</dbReference>
<dbReference type="Gene3D" id="4.10.830.10">
    <property type="entry name" value="30s Ribosomal Protein S14, Chain N"/>
    <property type="match status" value="1"/>
</dbReference>
<dbReference type="HAMAP" id="MF_01364_B">
    <property type="entry name" value="Ribosomal_uS14_2_B"/>
    <property type="match status" value="1"/>
</dbReference>
<dbReference type="InterPro" id="IPR001209">
    <property type="entry name" value="Ribosomal_uS14"/>
</dbReference>
<dbReference type="InterPro" id="IPR023053">
    <property type="entry name" value="Ribosomal_uS14_bact"/>
</dbReference>
<dbReference type="InterPro" id="IPR018271">
    <property type="entry name" value="Ribosomal_uS14_CS"/>
</dbReference>
<dbReference type="InterPro" id="IPR043140">
    <property type="entry name" value="Ribosomal_uS14_sf"/>
</dbReference>
<dbReference type="NCBIfam" id="NF005974">
    <property type="entry name" value="PRK08061.1"/>
    <property type="match status" value="1"/>
</dbReference>
<dbReference type="PANTHER" id="PTHR19836">
    <property type="entry name" value="30S RIBOSOMAL PROTEIN S14"/>
    <property type="match status" value="1"/>
</dbReference>
<dbReference type="PANTHER" id="PTHR19836:SF19">
    <property type="entry name" value="SMALL RIBOSOMAL SUBUNIT PROTEIN US14M"/>
    <property type="match status" value="1"/>
</dbReference>
<dbReference type="Pfam" id="PF00253">
    <property type="entry name" value="Ribosomal_S14"/>
    <property type="match status" value="1"/>
</dbReference>
<dbReference type="SUPFAM" id="SSF57716">
    <property type="entry name" value="Glucocorticoid receptor-like (DNA-binding domain)"/>
    <property type="match status" value="1"/>
</dbReference>
<dbReference type="PROSITE" id="PS00527">
    <property type="entry name" value="RIBOSOMAL_S14"/>
    <property type="match status" value="1"/>
</dbReference>